<gene>
    <name type="primary">ttdA</name>
    <name type="ordered locus">Z4414</name>
    <name type="ordered locus">ECs3944</name>
</gene>
<accession>Q8XBK7</accession>
<accession>Q7AAQ1</accession>
<comment type="catalytic activity">
    <reaction>
        <text>(2R,3R)-tartrate = oxaloacetate + H2O</text>
        <dbReference type="Rhea" id="RHEA:15413"/>
        <dbReference type="ChEBI" id="CHEBI:15377"/>
        <dbReference type="ChEBI" id="CHEBI:16452"/>
        <dbReference type="ChEBI" id="CHEBI:30924"/>
        <dbReference type="EC" id="4.2.1.32"/>
    </reaction>
</comment>
<comment type="cofactor">
    <cofactor evidence="3">
        <name>iron-sulfur cluster</name>
        <dbReference type="ChEBI" id="CHEBI:30408"/>
    </cofactor>
</comment>
<comment type="subunit">
    <text evidence="1">Tetramer of two alpha and two beta subunits.</text>
</comment>
<comment type="induction">
    <text evidence="1">Induced by tartrate, via TtdR.</text>
</comment>
<comment type="similarity">
    <text evidence="4">Belongs to the class-I fumarase family.</text>
</comment>
<dbReference type="EC" id="4.2.1.32"/>
<dbReference type="EMBL" id="AE005174">
    <property type="protein sequence ID" value="AAG58195.1"/>
    <property type="molecule type" value="Genomic_DNA"/>
</dbReference>
<dbReference type="EMBL" id="BA000007">
    <property type="protein sequence ID" value="BAB37367.1"/>
    <property type="molecule type" value="Genomic_DNA"/>
</dbReference>
<dbReference type="PIR" id="G85966">
    <property type="entry name" value="G85966"/>
</dbReference>
<dbReference type="PIR" id="H91121">
    <property type="entry name" value="H91121"/>
</dbReference>
<dbReference type="RefSeq" id="NP_311971.1">
    <property type="nucleotide sequence ID" value="NC_002695.1"/>
</dbReference>
<dbReference type="RefSeq" id="WP_000986788.1">
    <property type="nucleotide sequence ID" value="NZ_VOAI01000009.1"/>
</dbReference>
<dbReference type="SMR" id="Q8XBK7"/>
<dbReference type="STRING" id="155864.Z4414"/>
<dbReference type="GeneID" id="916192"/>
<dbReference type="KEGG" id="ece:Z4414"/>
<dbReference type="KEGG" id="ecs:ECs_3944"/>
<dbReference type="PATRIC" id="fig|386585.9.peg.4114"/>
<dbReference type="eggNOG" id="COG1951">
    <property type="taxonomic scope" value="Bacteria"/>
</dbReference>
<dbReference type="HOGENOM" id="CLU_041245_1_0_6"/>
<dbReference type="OMA" id="YPCHIAS"/>
<dbReference type="Proteomes" id="UP000000558">
    <property type="component" value="Chromosome"/>
</dbReference>
<dbReference type="Proteomes" id="UP000002519">
    <property type="component" value="Chromosome"/>
</dbReference>
<dbReference type="GO" id="GO:0051539">
    <property type="term" value="F:4 iron, 4 sulfur cluster binding"/>
    <property type="evidence" value="ECO:0007669"/>
    <property type="project" value="UniProtKB-KW"/>
</dbReference>
<dbReference type="GO" id="GO:0008730">
    <property type="term" value="F:L(+)-tartrate dehydratase activity"/>
    <property type="evidence" value="ECO:0007669"/>
    <property type="project" value="UniProtKB-EC"/>
</dbReference>
<dbReference type="GO" id="GO:0046872">
    <property type="term" value="F:metal ion binding"/>
    <property type="evidence" value="ECO:0007669"/>
    <property type="project" value="UniProtKB-KW"/>
</dbReference>
<dbReference type="InterPro" id="IPR051208">
    <property type="entry name" value="Class-I_Fumarase/Tartrate_DH"/>
</dbReference>
<dbReference type="InterPro" id="IPR004646">
    <property type="entry name" value="Fe-S_hydro-lyase_TtdA-typ_cat"/>
</dbReference>
<dbReference type="NCBIfam" id="NF006084">
    <property type="entry name" value="PRK08230.1"/>
    <property type="match status" value="1"/>
</dbReference>
<dbReference type="NCBIfam" id="TIGR00722">
    <property type="entry name" value="ttdA_fumA_fumB"/>
    <property type="match status" value="1"/>
</dbReference>
<dbReference type="PANTHER" id="PTHR30389">
    <property type="entry name" value="FUMARATE HYDRATASE-RELATED"/>
    <property type="match status" value="1"/>
</dbReference>
<dbReference type="PANTHER" id="PTHR30389:SF19">
    <property type="entry name" value="L(+)-TARTRATE DEHYDRATASE SUBUNIT ALPHA"/>
    <property type="match status" value="1"/>
</dbReference>
<dbReference type="Pfam" id="PF05681">
    <property type="entry name" value="Fumerase"/>
    <property type="match status" value="1"/>
</dbReference>
<keyword id="KW-0004">4Fe-4S</keyword>
<keyword id="KW-0408">Iron</keyword>
<keyword id="KW-0411">Iron-sulfur</keyword>
<keyword id="KW-0456">Lyase</keyword>
<keyword id="KW-0479">Metal-binding</keyword>
<keyword id="KW-1185">Reference proteome</keyword>
<proteinExistence type="inferred from homology"/>
<organism>
    <name type="scientific">Escherichia coli O157:H7</name>
    <dbReference type="NCBI Taxonomy" id="83334"/>
    <lineage>
        <taxon>Bacteria</taxon>
        <taxon>Pseudomonadati</taxon>
        <taxon>Pseudomonadota</taxon>
        <taxon>Gammaproteobacteria</taxon>
        <taxon>Enterobacterales</taxon>
        <taxon>Enterobacteriaceae</taxon>
        <taxon>Escherichia</taxon>
    </lineage>
</organism>
<sequence length="303" mass="32677">MMSESNKQQAVNKLTEIVANFTAMISTRMPDDVVDKLKQLKDAETSSMGKIIYHTMFDNMQKAIDLNRPACQDTGEIMFFVKVGSRFPLLGELQSILKQAVEEATIKAPLRHNAVEIFDEVNTGKNTGSGVPWVTWDIVPDGDDAEIEVYMAGGGCTLPGRSKVLMPSEGYEGVVKFVFENISTLAVNACPPVLVGVGIATSVETAAVLSRKAILRPIGSRHPNPKAAELELRLEEGLNRLGIGPQGLTGNSSVMGVHIESAARHPSTIGVAVSTGCWAHRRGTLLVHADLTFENLSHTRSAL</sequence>
<evidence type="ECO:0000250" key="1"/>
<evidence type="ECO:0000250" key="2">
    <source>
        <dbReference type="UniProtKB" id="E9AE57"/>
    </source>
</evidence>
<evidence type="ECO:0000250" key="3">
    <source>
        <dbReference type="UniProtKB" id="P05847"/>
    </source>
</evidence>
<evidence type="ECO:0000305" key="4"/>
<name>TTDA_ECO57</name>
<feature type="chain" id="PRO_0000262696" description="L(+)-tartrate dehydratase subunit alpha">
    <location>
        <begin position="1"/>
        <end position="303"/>
    </location>
</feature>
<feature type="binding site" evidence="2">
    <location>
        <position position="71"/>
    </location>
    <ligand>
        <name>iron-sulfur cluster</name>
        <dbReference type="ChEBI" id="CHEBI:30408"/>
    </ligand>
</feature>
<feature type="binding site" evidence="2">
    <location>
        <position position="190"/>
    </location>
    <ligand>
        <name>iron-sulfur cluster</name>
        <dbReference type="ChEBI" id="CHEBI:30408"/>
    </ligand>
</feature>
<feature type="binding site" evidence="2">
    <location>
        <position position="277"/>
    </location>
    <ligand>
        <name>iron-sulfur cluster</name>
        <dbReference type="ChEBI" id="CHEBI:30408"/>
    </ligand>
</feature>
<reference key="1">
    <citation type="journal article" date="2001" name="Nature">
        <title>Genome sequence of enterohaemorrhagic Escherichia coli O157:H7.</title>
        <authorList>
            <person name="Perna N.T."/>
            <person name="Plunkett G. III"/>
            <person name="Burland V."/>
            <person name="Mau B."/>
            <person name="Glasner J.D."/>
            <person name="Rose D.J."/>
            <person name="Mayhew G.F."/>
            <person name="Evans P.S."/>
            <person name="Gregor J."/>
            <person name="Kirkpatrick H.A."/>
            <person name="Posfai G."/>
            <person name="Hackett J."/>
            <person name="Klink S."/>
            <person name="Boutin A."/>
            <person name="Shao Y."/>
            <person name="Miller L."/>
            <person name="Grotbeck E.J."/>
            <person name="Davis N.W."/>
            <person name="Lim A."/>
            <person name="Dimalanta E.T."/>
            <person name="Potamousis K."/>
            <person name="Apodaca J."/>
            <person name="Anantharaman T.S."/>
            <person name="Lin J."/>
            <person name="Yen G."/>
            <person name="Schwartz D.C."/>
            <person name="Welch R.A."/>
            <person name="Blattner F.R."/>
        </authorList>
    </citation>
    <scope>NUCLEOTIDE SEQUENCE [LARGE SCALE GENOMIC DNA]</scope>
    <source>
        <strain>O157:H7 / EDL933 / ATCC 700927 / EHEC</strain>
    </source>
</reference>
<reference key="2">
    <citation type="journal article" date="2001" name="DNA Res.">
        <title>Complete genome sequence of enterohemorrhagic Escherichia coli O157:H7 and genomic comparison with a laboratory strain K-12.</title>
        <authorList>
            <person name="Hayashi T."/>
            <person name="Makino K."/>
            <person name="Ohnishi M."/>
            <person name="Kurokawa K."/>
            <person name="Ishii K."/>
            <person name="Yokoyama K."/>
            <person name="Han C.-G."/>
            <person name="Ohtsubo E."/>
            <person name="Nakayama K."/>
            <person name="Murata T."/>
            <person name="Tanaka M."/>
            <person name="Tobe T."/>
            <person name="Iida T."/>
            <person name="Takami H."/>
            <person name="Honda T."/>
            <person name="Sasakawa C."/>
            <person name="Ogasawara N."/>
            <person name="Yasunaga T."/>
            <person name="Kuhara S."/>
            <person name="Shiba T."/>
            <person name="Hattori M."/>
            <person name="Shinagawa H."/>
        </authorList>
    </citation>
    <scope>NUCLEOTIDE SEQUENCE [LARGE SCALE GENOMIC DNA]</scope>
    <source>
        <strain>O157:H7 / Sakai / RIMD 0509952 / EHEC</strain>
    </source>
</reference>
<protein>
    <recommendedName>
        <fullName>L(+)-tartrate dehydratase subunit alpha</fullName>
        <shortName>L-TTD alpha</shortName>
        <ecNumber>4.2.1.32</ecNumber>
    </recommendedName>
</protein>